<name>CYB_TOMRA</name>
<gene>
    <name type="primary">MT-CYB</name>
    <name type="synonym">COB</name>
    <name type="synonym">CYTB</name>
    <name type="synonym">MTCYB</name>
</gene>
<reference key="1">
    <citation type="journal article" date="1994" name="J. Mammal.">
        <title>Familial affinity of Tomopeas ravus (Chiroptera) based on protein electrophoretic and cytochrome b sequence data.</title>
        <authorList>
            <person name="Sudman P.D."/>
            <person name="Barkley L.J."/>
            <person name="Hafner M.S."/>
        </authorList>
    </citation>
    <scope>NUCLEOTIDE SEQUENCE [GENOMIC DNA]</scope>
    <source>
        <strain>Isolate LSUMZ 25084</strain>
        <tissue>Kidney</tissue>
        <tissue>Liver</tissue>
    </source>
</reference>
<organism>
    <name type="scientific">Tomopeas ravum</name>
    <name type="common">Blunt-eared bat</name>
    <dbReference type="NCBI Taxonomy" id="3370919"/>
    <lineage>
        <taxon>Eukaryota</taxon>
        <taxon>Metazoa</taxon>
        <taxon>Chordata</taxon>
        <taxon>Craniata</taxon>
        <taxon>Vertebrata</taxon>
        <taxon>Euteleostomi</taxon>
        <taxon>Mammalia</taxon>
        <taxon>Eutheria</taxon>
        <taxon>Laurasiatheria</taxon>
        <taxon>Chiroptera</taxon>
        <taxon>Yangochiroptera</taxon>
        <taxon>Molossidae</taxon>
        <taxon>Tomopeas</taxon>
    </lineage>
</organism>
<feature type="chain" id="PRO_0000061671" description="Cytochrome b">
    <location>
        <begin position="1"/>
        <end position="176" status="greater than"/>
    </location>
</feature>
<feature type="transmembrane region" description="Helical" evidence="3">
    <location>
        <begin position="33"/>
        <end position="53"/>
    </location>
</feature>
<feature type="transmembrane region" description="Helical" evidence="2">
    <location>
        <begin position="77"/>
        <end position="98"/>
    </location>
</feature>
<feature type="transmembrane region" description="Helical" evidence="2">
    <location>
        <begin position="113"/>
        <end position="133"/>
    </location>
</feature>
<feature type="binding site" description="axial binding residue" evidence="2">
    <location>
        <position position="83"/>
    </location>
    <ligand>
        <name>heme b</name>
        <dbReference type="ChEBI" id="CHEBI:60344"/>
        <label>b562</label>
    </ligand>
    <ligandPart>
        <name>Fe</name>
        <dbReference type="ChEBI" id="CHEBI:18248"/>
    </ligandPart>
</feature>
<feature type="binding site" description="axial binding residue" evidence="2">
    <location>
        <position position="97"/>
    </location>
    <ligand>
        <name>heme b</name>
        <dbReference type="ChEBI" id="CHEBI:60344"/>
        <label>b566</label>
    </ligand>
    <ligandPart>
        <name>Fe</name>
        <dbReference type="ChEBI" id="CHEBI:18248"/>
    </ligandPart>
</feature>
<feature type="non-terminal residue">
    <location>
        <position position="176"/>
    </location>
</feature>
<dbReference type="EMBL" id="L19735">
    <property type="protein sequence ID" value="AAA17780.1"/>
    <property type="molecule type" value="Genomic_DNA"/>
</dbReference>
<dbReference type="SMR" id="Q36118"/>
<dbReference type="GO" id="GO:0005743">
    <property type="term" value="C:mitochondrial inner membrane"/>
    <property type="evidence" value="ECO:0007669"/>
    <property type="project" value="UniProtKB-SubCell"/>
</dbReference>
<dbReference type="GO" id="GO:0046872">
    <property type="term" value="F:metal ion binding"/>
    <property type="evidence" value="ECO:0007669"/>
    <property type="project" value="UniProtKB-KW"/>
</dbReference>
<dbReference type="GO" id="GO:0008121">
    <property type="term" value="F:ubiquinol-cytochrome-c reductase activity"/>
    <property type="evidence" value="ECO:0007669"/>
    <property type="project" value="TreeGrafter"/>
</dbReference>
<dbReference type="GO" id="GO:0006122">
    <property type="term" value="P:mitochondrial electron transport, ubiquinol to cytochrome c"/>
    <property type="evidence" value="ECO:0007669"/>
    <property type="project" value="TreeGrafter"/>
</dbReference>
<dbReference type="CDD" id="cd00284">
    <property type="entry name" value="Cytochrome_b_N"/>
    <property type="match status" value="1"/>
</dbReference>
<dbReference type="Gene3D" id="1.20.810.10">
    <property type="entry name" value="Cytochrome Bc1 Complex, Chain C"/>
    <property type="match status" value="1"/>
</dbReference>
<dbReference type="InterPro" id="IPR005797">
    <property type="entry name" value="Cyt_b/b6_N"/>
</dbReference>
<dbReference type="InterPro" id="IPR027387">
    <property type="entry name" value="Cytb/b6-like_sf"/>
</dbReference>
<dbReference type="InterPro" id="IPR048259">
    <property type="entry name" value="Cytochrome_b_N_euk/bac"/>
</dbReference>
<dbReference type="InterPro" id="IPR016174">
    <property type="entry name" value="Di-haem_cyt_TM"/>
</dbReference>
<dbReference type="PANTHER" id="PTHR19271">
    <property type="entry name" value="CYTOCHROME B"/>
    <property type="match status" value="1"/>
</dbReference>
<dbReference type="PANTHER" id="PTHR19271:SF16">
    <property type="entry name" value="CYTOCHROME B"/>
    <property type="match status" value="1"/>
</dbReference>
<dbReference type="Pfam" id="PF00033">
    <property type="entry name" value="Cytochrome_B"/>
    <property type="match status" value="1"/>
</dbReference>
<dbReference type="SUPFAM" id="SSF81342">
    <property type="entry name" value="Transmembrane di-heme cytochromes"/>
    <property type="match status" value="1"/>
</dbReference>
<dbReference type="PROSITE" id="PS51002">
    <property type="entry name" value="CYTB_NTER"/>
    <property type="match status" value="1"/>
</dbReference>
<comment type="function">
    <text evidence="2">Component of the ubiquinol-cytochrome c reductase complex (complex III or cytochrome b-c1 complex) that is part of the mitochondrial respiratory chain. The b-c1 complex mediates electron transfer from ubiquinol to cytochrome c. Contributes to the generation of a proton gradient across the mitochondrial membrane that is then used for ATP synthesis.</text>
</comment>
<comment type="cofactor">
    <cofactor evidence="2">
        <name>heme b</name>
        <dbReference type="ChEBI" id="CHEBI:60344"/>
    </cofactor>
    <text evidence="2">Binds 2 heme b groups non-covalently.</text>
</comment>
<comment type="subunit">
    <text evidence="2">The cytochrome bc1 complex contains 11 subunits: 3 respiratory subunits (MT-CYB, CYC1 and UQCRFS1), 2 core proteins (UQCRC1 and UQCRC2) and 6 low-molecular weight proteins (UQCRH/QCR6, UQCRB/QCR7, UQCRQ/QCR8, UQCR10/QCR9, UQCR11/QCR10 and a cleavage product of UQCRFS1). This cytochrome bc1 complex then forms a dimer.</text>
</comment>
<comment type="subcellular location">
    <subcellularLocation>
        <location evidence="2">Mitochondrion inner membrane</location>
        <topology evidence="2">Multi-pass membrane protein</topology>
    </subcellularLocation>
</comment>
<comment type="miscellaneous">
    <text evidence="1">Heme 1 (or BL or b562) is low-potential and absorbs at about 562 nm, and heme 2 (or BH or b566) is high-potential and absorbs at about 566 nm.</text>
</comment>
<comment type="similarity">
    <text evidence="3">Belongs to the cytochrome b family.</text>
</comment>
<comment type="caution">
    <text evidence="2">The full-length protein contains only eight transmembrane helices, not nine as predicted by bioinformatics tools.</text>
</comment>
<proteinExistence type="inferred from homology"/>
<protein>
    <recommendedName>
        <fullName>Cytochrome b</fullName>
    </recommendedName>
    <alternativeName>
        <fullName>Complex III subunit 3</fullName>
    </alternativeName>
    <alternativeName>
        <fullName>Complex III subunit III</fullName>
    </alternativeName>
    <alternativeName>
        <fullName>Cytochrome b-c1 complex subunit 3</fullName>
    </alternativeName>
    <alternativeName>
        <fullName>Ubiquinol-cytochrome-c reductase complex cytochrome b subunit</fullName>
    </alternativeName>
</protein>
<keyword id="KW-0249">Electron transport</keyword>
<keyword id="KW-0349">Heme</keyword>
<keyword id="KW-0408">Iron</keyword>
<keyword id="KW-0472">Membrane</keyword>
<keyword id="KW-0479">Metal-binding</keyword>
<keyword id="KW-0496">Mitochondrion</keyword>
<keyword id="KW-0999">Mitochondrion inner membrane</keyword>
<keyword id="KW-0679">Respiratory chain</keyword>
<keyword id="KW-0812">Transmembrane</keyword>
<keyword id="KW-1133">Transmembrane helix</keyword>
<keyword id="KW-0813">Transport</keyword>
<keyword id="KW-0830">Ubiquinone</keyword>
<evidence type="ECO:0000250" key="1"/>
<evidence type="ECO:0000250" key="2">
    <source>
        <dbReference type="UniProtKB" id="P00157"/>
    </source>
</evidence>
<evidence type="ECO:0000255" key="3">
    <source>
        <dbReference type="PROSITE-ProRule" id="PRU00968"/>
    </source>
</evidence>
<sequence length="176" mass="19755">MTNIRKSHPLLKIVNDALIDLPAPSNISSWWNFGSLLGICLTIQILTGLFLAMHYTSDTTTAFNSVTHICRDVNYGWLLRYLHANGASMFFICLYLHVGRGLYYGSYTYTETWNMGIILLFAVMATAFMGYVLPWGQMSFWGATVITNLLSAIPYVGTDLVEWIWGGFSVDKATLT</sequence>
<accession>Q36118</accession>
<geneLocation type="mitochondrion"/>